<proteinExistence type="inferred from homology"/>
<feature type="initiator methionine" description="Removed" evidence="1">
    <location>
        <position position="1"/>
    </location>
</feature>
<feature type="chain" id="PRO_0000130191" description="Small ribosomal subunit protein uS3">
    <location>
        <begin position="2"/>
        <end position="233"/>
    </location>
</feature>
<feature type="domain" description="KH type-2">
    <location>
        <begin position="39"/>
        <end position="107"/>
    </location>
</feature>
<protein>
    <recommendedName>
        <fullName evidence="2">Small ribosomal subunit protein uS3</fullName>
    </recommendedName>
    <alternativeName>
        <fullName>30S ribosomal protein S3</fullName>
    </alternativeName>
</protein>
<dbReference type="EMBL" id="AL513382">
    <property type="protein sequence ID" value="CAD08179.1"/>
    <property type="molecule type" value="Genomic_DNA"/>
</dbReference>
<dbReference type="EMBL" id="AE014613">
    <property type="protein sequence ID" value="AAO71538.1"/>
    <property type="molecule type" value="Genomic_DNA"/>
</dbReference>
<dbReference type="RefSeq" id="NP_458466.1">
    <property type="nucleotide sequence ID" value="NC_003198.1"/>
</dbReference>
<dbReference type="RefSeq" id="WP_000529945.1">
    <property type="nucleotide sequence ID" value="NZ_WSUR01000046.1"/>
</dbReference>
<dbReference type="SMR" id="P0A7V7"/>
<dbReference type="STRING" id="220341.gene:17588192"/>
<dbReference type="GeneID" id="97603663"/>
<dbReference type="KEGG" id="stt:t4071"/>
<dbReference type="KEGG" id="sty:STY4364"/>
<dbReference type="PATRIC" id="fig|220341.7.peg.4460"/>
<dbReference type="eggNOG" id="COG0092">
    <property type="taxonomic scope" value="Bacteria"/>
</dbReference>
<dbReference type="HOGENOM" id="CLU_058591_0_2_6"/>
<dbReference type="OMA" id="KTNPIGN"/>
<dbReference type="OrthoDB" id="9806396at2"/>
<dbReference type="Proteomes" id="UP000000541">
    <property type="component" value="Chromosome"/>
</dbReference>
<dbReference type="Proteomes" id="UP000002670">
    <property type="component" value="Chromosome"/>
</dbReference>
<dbReference type="GO" id="GO:0022627">
    <property type="term" value="C:cytosolic small ribosomal subunit"/>
    <property type="evidence" value="ECO:0007669"/>
    <property type="project" value="TreeGrafter"/>
</dbReference>
<dbReference type="GO" id="GO:0003729">
    <property type="term" value="F:mRNA binding"/>
    <property type="evidence" value="ECO:0007669"/>
    <property type="project" value="UniProtKB-UniRule"/>
</dbReference>
<dbReference type="GO" id="GO:0019843">
    <property type="term" value="F:rRNA binding"/>
    <property type="evidence" value="ECO:0007669"/>
    <property type="project" value="UniProtKB-UniRule"/>
</dbReference>
<dbReference type="GO" id="GO:0003735">
    <property type="term" value="F:structural constituent of ribosome"/>
    <property type="evidence" value="ECO:0007669"/>
    <property type="project" value="InterPro"/>
</dbReference>
<dbReference type="GO" id="GO:0006412">
    <property type="term" value="P:translation"/>
    <property type="evidence" value="ECO:0007669"/>
    <property type="project" value="UniProtKB-UniRule"/>
</dbReference>
<dbReference type="CDD" id="cd02412">
    <property type="entry name" value="KH-II_30S_S3"/>
    <property type="match status" value="1"/>
</dbReference>
<dbReference type="FunFam" id="3.30.1140.32:FF:000001">
    <property type="entry name" value="30S ribosomal protein S3"/>
    <property type="match status" value="1"/>
</dbReference>
<dbReference type="FunFam" id="3.30.300.20:FF:000001">
    <property type="entry name" value="30S ribosomal protein S3"/>
    <property type="match status" value="1"/>
</dbReference>
<dbReference type="Gene3D" id="3.30.300.20">
    <property type="match status" value="1"/>
</dbReference>
<dbReference type="Gene3D" id="3.30.1140.32">
    <property type="entry name" value="Ribosomal protein S3, C-terminal domain"/>
    <property type="match status" value="1"/>
</dbReference>
<dbReference type="HAMAP" id="MF_01309_B">
    <property type="entry name" value="Ribosomal_uS3_B"/>
    <property type="match status" value="1"/>
</dbReference>
<dbReference type="InterPro" id="IPR004087">
    <property type="entry name" value="KH_dom"/>
</dbReference>
<dbReference type="InterPro" id="IPR015946">
    <property type="entry name" value="KH_dom-like_a/b"/>
</dbReference>
<dbReference type="InterPro" id="IPR004044">
    <property type="entry name" value="KH_dom_type_2"/>
</dbReference>
<dbReference type="InterPro" id="IPR009019">
    <property type="entry name" value="KH_sf_prok-type"/>
</dbReference>
<dbReference type="InterPro" id="IPR036419">
    <property type="entry name" value="Ribosomal_S3_C_sf"/>
</dbReference>
<dbReference type="InterPro" id="IPR005704">
    <property type="entry name" value="Ribosomal_uS3_bac-typ"/>
</dbReference>
<dbReference type="InterPro" id="IPR001351">
    <property type="entry name" value="Ribosomal_uS3_C"/>
</dbReference>
<dbReference type="InterPro" id="IPR018280">
    <property type="entry name" value="Ribosomal_uS3_CS"/>
</dbReference>
<dbReference type="NCBIfam" id="TIGR01009">
    <property type="entry name" value="rpsC_bact"/>
    <property type="match status" value="1"/>
</dbReference>
<dbReference type="PANTHER" id="PTHR11760">
    <property type="entry name" value="30S/40S RIBOSOMAL PROTEIN S3"/>
    <property type="match status" value="1"/>
</dbReference>
<dbReference type="PANTHER" id="PTHR11760:SF19">
    <property type="entry name" value="SMALL RIBOSOMAL SUBUNIT PROTEIN US3C"/>
    <property type="match status" value="1"/>
</dbReference>
<dbReference type="Pfam" id="PF07650">
    <property type="entry name" value="KH_2"/>
    <property type="match status" value="1"/>
</dbReference>
<dbReference type="Pfam" id="PF00189">
    <property type="entry name" value="Ribosomal_S3_C"/>
    <property type="match status" value="1"/>
</dbReference>
<dbReference type="SMART" id="SM00322">
    <property type="entry name" value="KH"/>
    <property type="match status" value="1"/>
</dbReference>
<dbReference type="SUPFAM" id="SSF54814">
    <property type="entry name" value="Prokaryotic type KH domain (KH-domain type II)"/>
    <property type="match status" value="1"/>
</dbReference>
<dbReference type="SUPFAM" id="SSF54821">
    <property type="entry name" value="Ribosomal protein S3 C-terminal domain"/>
    <property type="match status" value="1"/>
</dbReference>
<dbReference type="PROSITE" id="PS50823">
    <property type="entry name" value="KH_TYPE_2"/>
    <property type="match status" value="1"/>
</dbReference>
<dbReference type="PROSITE" id="PS00548">
    <property type="entry name" value="RIBOSOMAL_S3"/>
    <property type="match status" value="1"/>
</dbReference>
<reference key="1">
    <citation type="journal article" date="2001" name="Nature">
        <title>Complete genome sequence of a multiple drug resistant Salmonella enterica serovar Typhi CT18.</title>
        <authorList>
            <person name="Parkhill J."/>
            <person name="Dougan G."/>
            <person name="James K.D."/>
            <person name="Thomson N.R."/>
            <person name="Pickard D."/>
            <person name="Wain J."/>
            <person name="Churcher C.M."/>
            <person name="Mungall K.L."/>
            <person name="Bentley S.D."/>
            <person name="Holden M.T.G."/>
            <person name="Sebaihia M."/>
            <person name="Baker S."/>
            <person name="Basham D."/>
            <person name="Brooks K."/>
            <person name="Chillingworth T."/>
            <person name="Connerton P."/>
            <person name="Cronin A."/>
            <person name="Davis P."/>
            <person name="Davies R.M."/>
            <person name="Dowd L."/>
            <person name="White N."/>
            <person name="Farrar J."/>
            <person name="Feltwell T."/>
            <person name="Hamlin N."/>
            <person name="Haque A."/>
            <person name="Hien T.T."/>
            <person name="Holroyd S."/>
            <person name="Jagels K."/>
            <person name="Krogh A."/>
            <person name="Larsen T.S."/>
            <person name="Leather S."/>
            <person name="Moule S."/>
            <person name="O'Gaora P."/>
            <person name="Parry C."/>
            <person name="Quail M.A."/>
            <person name="Rutherford K.M."/>
            <person name="Simmonds M."/>
            <person name="Skelton J."/>
            <person name="Stevens K."/>
            <person name="Whitehead S."/>
            <person name="Barrell B.G."/>
        </authorList>
    </citation>
    <scope>NUCLEOTIDE SEQUENCE [LARGE SCALE GENOMIC DNA]</scope>
    <source>
        <strain>CT18</strain>
    </source>
</reference>
<reference key="2">
    <citation type="journal article" date="2003" name="J. Bacteriol.">
        <title>Comparative genomics of Salmonella enterica serovar Typhi strains Ty2 and CT18.</title>
        <authorList>
            <person name="Deng W."/>
            <person name="Liou S.-R."/>
            <person name="Plunkett G. III"/>
            <person name="Mayhew G.F."/>
            <person name="Rose D.J."/>
            <person name="Burland V."/>
            <person name="Kodoyianni V."/>
            <person name="Schwartz D.C."/>
            <person name="Blattner F.R."/>
        </authorList>
    </citation>
    <scope>NUCLEOTIDE SEQUENCE [LARGE SCALE GENOMIC DNA]</scope>
    <source>
        <strain>ATCC 700931 / Ty2</strain>
    </source>
</reference>
<name>RS3_SALTI</name>
<gene>
    <name type="primary">rpsC</name>
    <name type="ordered locus">STY4364</name>
    <name type="ordered locus">t4071</name>
</gene>
<evidence type="ECO:0000250" key="1"/>
<evidence type="ECO:0000305" key="2"/>
<keyword id="KW-0687">Ribonucleoprotein</keyword>
<keyword id="KW-0689">Ribosomal protein</keyword>
<keyword id="KW-0694">RNA-binding</keyword>
<keyword id="KW-0699">rRNA-binding</keyword>
<organism>
    <name type="scientific">Salmonella typhi</name>
    <dbReference type="NCBI Taxonomy" id="90370"/>
    <lineage>
        <taxon>Bacteria</taxon>
        <taxon>Pseudomonadati</taxon>
        <taxon>Pseudomonadota</taxon>
        <taxon>Gammaproteobacteria</taxon>
        <taxon>Enterobacterales</taxon>
        <taxon>Enterobacteriaceae</taxon>
        <taxon>Salmonella</taxon>
    </lineage>
</organism>
<accession>P0A7V7</accession>
<accession>P02352</accession>
<comment type="function">
    <text evidence="1">Binds the lower part of the 30S subunit head. Binds mRNA in the 70S ribosome, positioning it for translation (By similarity).</text>
</comment>
<comment type="subunit">
    <text evidence="1">Part of the 30S ribosomal subunit. Forms a tight complex with proteins S10 and S14. Some nascent polypeptide chains are able to cross-link to this protein in situ (By similarity).</text>
</comment>
<comment type="similarity">
    <text evidence="2">Belongs to the universal ribosomal protein uS3 family.</text>
</comment>
<sequence length="233" mass="25983">MGQKVHPNGIRLGIVKPWNSTWFANTKEFADNLDSDFKVRQYLTKELAKASVSRIVIERPAKSIRVTIHTARPGIVIGKKGEDVEKLRKVVADIAGVPAQINIAEVRKPELDAKLVADSITSQLERRVMFRRAMKRAVQNAMRLGAKGIKVEVSGRLGGAEIARTEWYREGRVPLHTLRADIDYNTSEAHTTYGVIGVKVWIFKGEILGGMAAVEQPEKPAAQPKKQQRKGRK</sequence>